<gene>
    <name evidence="8" type="primary">tle3b</name>
    <name evidence="7" type="synonym">gro1</name>
    <name evidence="7" type="synonym">groucho1</name>
</gene>
<evidence type="ECO:0000250" key="1">
    <source>
        <dbReference type="UniProtKB" id="Q04724"/>
    </source>
</evidence>
<evidence type="ECO:0000250" key="2">
    <source>
        <dbReference type="UniProtKB" id="Q04726"/>
    </source>
</evidence>
<evidence type="ECO:0000255" key="3"/>
<evidence type="ECO:0000256" key="4">
    <source>
        <dbReference type="SAM" id="MobiDB-lite"/>
    </source>
</evidence>
<evidence type="ECO:0000269" key="5">
    <source>
    </source>
</evidence>
<evidence type="ECO:0000269" key="6">
    <source>
    </source>
</evidence>
<evidence type="ECO:0000303" key="7">
    <source>
    </source>
</evidence>
<evidence type="ECO:0000305" key="8"/>
<evidence type="ECO:0000312" key="9">
    <source>
        <dbReference type="EMBL" id="AAI62571.1"/>
    </source>
</evidence>
<keyword id="KW-0539">Nucleus</keyword>
<keyword id="KW-0597">Phosphoprotein</keyword>
<keyword id="KW-1185">Reference proteome</keyword>
<keyword id="KW-0677">Repeat</keyword>
<keyword id="KW-0853">WD repeat</keyword>
<sequence>MYPQGRHPAPHQPGQPGFKFTVAESCDRIKDEFQFLQAQYHSLKVEYDKLANEKTEMQRHYVMYYEMSYGLNIEMHKQTEIAKRLNAILAQIMPFLSQEHQQQVAQAVERAKQVTMTELNAIIGVRGLPNLPLTQQQLQAQHLSHAAHGPPVQLPPHPSGLQPPGIPPVTGSGSGLLALGALGSQAHLPVKDEKNHHDLEHRERESSTNNSVSPSDSLRASEKHRGSSEYSLDPKKRRVEEKDNMSRYDSDGDKSDDLVVDVSNEDPATPRVSPSHSPPENGLDKARALKKDAPNSPASVASSGSTPSSKAKDHPHNDKSSTPGLKSNTPTPRNDAPTPGTSNTPGLRPHPGKPPGMEALTAPALRTPLSIAPPYGTPFMMGHHPEMNGSLTSPGVYPGLHISPQMSAAAAAAYGRTHMPGFDPHPHMRAPVLPASLTSIPGGKPAYSFHVSADGQMQPVPFPPDALIGPGIPRHARQINTLSHGEVVCAVTISNPTRHVYTGGKGCVKIWDISQPGSKSPVSQLDCLNRDNYIRSCKLLPDGRTLIVGGEASTLTIWDLASQTPRIKAELTSSAPACYALAISPDAKVCFSCCSDGNIAVWDLHNQTLVRQFQGHTDGASCIDISHDGTKLWTGGLDNTVRSWDLREGRQLQQHDFTSQIFSLGYCPTGEWLAVGMESSNVEVLHHTKPDKYQLHLHESCVLSLKFAYCGKWFVSTGKDNLLNAWRTPYGASIFQSKESSSVLSCDISADDKYIVTGSGDKKATVYEVIY</sequence>
<protein>
    <recommendedName>
        <fullName evidence="8">Transducin-like enhancer protein 3-B</fullName>
    </recommendedName>
    <alternativeName>
        <fullName evidence="7">Protein groucho-1</fullName>
    </alternativeName>
</protein>
<accession>O13168</accession>
<accession>Q98TH2</accession>
<comment type="function">
    <text evidence="1 2">Transcriptional corepressor that binds to a number of transcription factors. Inhibits the transcriptional activation mediated by CTNNB1 and TCF family members in Wnt signaling (By similarity). The effects of full-length TLE family members may be modulated by association with dominant-negative AES (By similarity).</text>
</comment>
<comment type="subcellular location">
    <subcellularLocation>
        <location evidence="2">Nucleus</location>
    </subcellularLocation>
</comment>
<comment type="tissue specificity">
    <text evidence="6">At gastrulation, expression is absent within the axial mesoderm. After gastrulation is complete, expressed in the presomitic mesoderm, but expression in the tailbud doesn't begin until the six to seven somite stage, after which it becomes abundant. Expression is abundant throughout somitogenesis within the posterior half of the somites, but is absent from older somites. Also expressed in a dynamic manner within the neural plate.</text>
</comment>
<comment type="developmental stage">
    <text evidence="6">Expressed both maternally and zygotically. Expression decreases from the mid-blastula stages onwards before increasing again at the start of gastrulation.</text>
</comment>
<comment type="similarity">
    <text evidence="8">Belongs to the WD repeat Groucho/TLE family.</text>
</comment>
<dbReference type="EMBL" id="AB040707">
    <property type="protein sequence ID" value="BAB40698.1"/>
    <property type="molecule type" value="mRNA"/>
</dbReference>
<dbReference type="EMBL" id="AL954672">
    <property type="status" value="NOT_ANNOTATED_CDS"/>
    <property type="molecule type" value="Genomic_DNA"/>
</dbReference>
<dbReference type="EMBL" id="BC162571">
    <property type="protein sequence ID" value="AAI62571.1"/>
    <property type="molecule type" value="mRNA"/>
</dbReference>
<dbReference type="EMBL" id="U96451">
    <property type="protein sequence ID" value="AAB57808.1"/>
    <property type="molecule type" value="mRNA"/>
</dbReference>
<dbReference type="EMBL" id="Y12467">
    <property type="protein sequence ID" value="CAA73070.1"/>
    <property type="molecule type" value="mRNA"/>
</dbReference>
<dbReference type="RefSeq" id="NP_571855.1">
    <property type="nucleotide sequence ID" value="NM_131780.1"/>
</dbReference>
<dbReference type="RefSeq" id="XP_068078224.1">
    <property type="nucleotide sequence ID" value="XM_068222123.1"/>
</dbReference>
<dbReference type="RefSeq" id="XP_068078225.1">
    <property type="nucleotide sequence ID" value="XM_068222124.1"/>
</dbReference>
<dbReference type="SMR" id="O13168"/>
<dbReference type="FunCoup" id="O13168">
    <property type="interactions" value="2295"/>
</dbReference>
<dbReference type="STRING" id="7955.ENSDARP00000143498"/>
<dbReference type="iPTMnet" id="O13168"/>
<dbReference type="PaxDb" id="7955-ENSDARP00000109120"/>
<dbReference type="Ensembl" id="ENSDART00000130553">
    <property type="protein sequence ID" value="ENSDARP00000109120"/>
    <property type="gene ID" value="ENSDARG00000069006"/>
</dbReference>
<dbReference type="Ensembl" id="ENSDART00000175980">
    <property type="protein sequence ID" value="ENSDARP00000143498"/>
    <property type="gene ID" value="ENSDARG00000069006"/>
</dbReference>
<dbReference type="GeneID" id="100007463"/>
<dbReference type="KEGG" id="dre:100007463"/>
<dbReference type="AGR" id="ZFIN:ZDB-GENE-990415-85"/>
<dbReference type="CTD" id="100007463"/>
<dbReference type="ZFIN" id="ZDB-GENE-990415-85">
    <property type="gene designation" value="tle3b"/>
</dbReference>
<dbReference type="eggNOG" id="KOG0639">
    <property type="taxonomic scope" value="Eukaryota"/>
</dbReference>
<dbReference type="InParanoid" id="O13168"/>
<dbReference type="OMA" id="LTPDANW"/>
<dbReference type="OrthoDB" id="2624652at2759"/>
<dbReference type="TreeFam" id="TF314167"/>
<dbReference type="Reactome" id="R-DRE-3769402">
    <property type="pathway name" value="Deactivation of the beta-catenin transactivating complex"/>
</dbReference>
<dbReference type="Reactome" id="R-DRE-4641265">
    <property type="pathway name" value="Repression of WNT target genes"/>
</dbReference>
<dbReference type="Reactome" id="R-DRE-9018519">
    <property type="pathway name" value="Estrogen-dependent gene expression"/>
</dbReference>
<dbReference type="PRO" id="PR:O13168"/>
<dbReference type="Proteomes" id="UP000000437">
    <property type="component" value="Chromosome 7"/>
</dbReference>
<dbReference type="Bgee" id="ENSDARG00000069006">
    <property type="expression patterns" value="Expressed in mature ovarian follicle and 31 other cell types or tissues"/>
</dbReference>
<dbReference type="ExpressionAtlas" id="O13168">
    <property type="expression patterns" value="baseline and differential"/>
</dbReference>
<dbReference type="GO" id="GO:0005634">
    <property type="term" value="C:nucleus"/>
    <property type="evidence" value="ECO:0000318"/>
    <property type="project" value="GO_Central"/>
</dbReference>
<dbReference type="GO" id="GO:0005667">
    <property type="term" value="C:transcription regulator complex"/>
    <property type="evidence" value="ECO:0000318"/>
    <property type="project" value="GO_Central"/>
</dbReference>
<dbReference type="GO" id="GO:0003714">
    <property type="term" value="F:transcription corepressor activity"/>
    <property type="evidence" value="ECO:0000318"/>
    <property type="project" value="GO_Central"/>
</dbReference>
<dbReference type="GO" id="GO:0030099">
    <property type="term" value="P:myeloid cell differentiation"/>
    <property type="evidence" value="ECO:0000315"/>
    <property type="project" value="ZFIN"/>
</dbReference>
<dbReference type="GO" id="GO:0090090">
    <property type="term" value="P:negative regulation of canonical Wnt signaling pathway"/>
    <property type="evidence" value="ECO:0000318"/>
    <property type="project" value="GO_Central"/>
</dbReference>
<dbReference type="CDD" id="cd00200">
    <property type="entry name" value="WD40"/>
    <property type="match status" value="1"/>
</dbReference>
<dbReference type="FunFam" id="2.130.10.10:FF:000001">
    <property type="entry name" value="transducin-like enhancer protein 3 isoform X1"/>
    <property type="match status" value="1"/>
</dbReference>
<dbReference type="Gene3D" id="2.130.10.10">
    <property type="entry name" value="YVTN repeat-like/Quinoprotein amine dehydrogenase"/>
    <property type="match status" value="1"/>
</dbReference>
<dbReference type="InterPro" id="IPR005617">
    <property type="entry name" value="Groucho/TLE_N"/>
</dbReference>
<dbReference type="InterPro" id="IPR009146">
    <property type="entry name" value="Groucho_enhance"/>
</dbReference>
<dbReference type="InterPro" id="IPR015943">
    <property type="entry name" value="WD40/YVTN_repeat-like_dom_sf"/>
</dbReference>
<dbReference type="InterPro" id="IPR019775">
    <property type="entry name" value="WD40_repeat_CS"/>
</dbReference>
<dbReference type="InterPro" id="IPR036322">
    <property type="entry name" value="WD40_repeat_dom_sf"/>
</dbReference>
<dbReference type="InterPro" id="IPR001680">
    <property type="entry name" value="WD40_rpt"/>
</dbReference>
<dbReference type="PANTHER" id="PTHR10814">
    <property type="entry name" value="TRANSDUCIN-LIKE ENHANCER PROTEIN"/>
    <property type="match status" value="1"/>
</dbReference>
<dbReference type="PANTHER" id="PTHR10814:SF24">
    <property type="entry name" value="TRANSDUCIN-LIKE ENHANCER PROTEIN 3"/>
    <property type="match status" value="1"/>
</dbReference>
<dbReference type="Pfam" id="PF03920">
    <property type="entry name" value="TLE_N"/>
    <property type="match status" value="1"/>
</dbReference>
<dbReference type="Pfam" id="PF00400">
    <property type="entry name" value="WD40"/>
    <property type="match status" value="6"/>
</dbReference>
<dbReference type="PRINTS" id="PR01850">
    <property type="entry name" value="GROUCHOFAMLY"/>
</dbReference>
<dbReference type="SMART" id="SM00320">
    <property type="entry name" value="WD40"/>
    <property type="match status" value="7"/>
</dbReference>
<dbReference type="SUPFAM" id="SSF50978">
    <property type="entry name" value="WD40 repeat-like"/>
    <property type="match status" value="1"/>
</dbReference>
<dbReference type="PROSITE" id="PS00678">
    <property type="entry name" value="WD_REPEATS_1"/>
    <property type="match status" value="2"/>
</dbReference>
<dbReference type="PROSITE" id="PS50082">
    <property type="entry name" value="WD_REPEATS_2"/>
    <property type="match status" value="2"/>
</dbReference>
<dbReference type="PROSITE" id="PS50294">
    <property type="entry name" value="WD_REPEATS_REGION"/>
    <property type="match status" value="2"/>
</dbReference>
<organism>
    <name type="scientific">Danio rerio</name>
    <name type="common">Zebrafish</name>
    <name type="synonym">Brachydanio rerio</name>
    <dbReference type="NCBI Taxonomy" id="7955"/>
    <lineage>
        <taxon>Eukaryota</taxon>
        <taxon>Metazoa</taxon>
        <taxon>Chordata</taxon>
        <taxon>Craniata</taxon>
        <taxon>Vertebrata</taxon>
        <taxon>Euteleostomi</taxon>
        <taxon>Actinopterygii</taxon>
        <taxon>Neopterygii</taxon>
        <taxon>Teleostei</taxon>
        <taxon>Ostariophysi</taxon>
        <taxon>Cypriniformes</taxon>
        <taxon>Danionidae</taxon>
        <taxon>Danioninae</taxon>
        <taxon>Danio</taxon>
    </lineage>
</organism>
<feature type="chain" id="PRO_0000051288" description="Transducin-like enhancer protein 3-B">
    <location>
        <begin position="1"/>
        <end position="771"/>
    </location>
</feature>
<feature type="repeat" description="WD 1">
    <location>
        <begin position="483"/>
        <end position="521"/>
    </location>
</feature>
<feature type="repeat" description="WD 2">
    <location>
        <begin position="529"/>
        <end position="568"/>
    </location>
</feature>
<feature type="repeat" description="WD 3">
    <location>
        <begin position="573"/>
        <end position="612"/>
    </location>
</feature>
<feature type="repeat" description="WD 4">
    <location>
        <begin position="615"/>
        <end position="654"/>
    </location>
</feature>
<feature type="repeat" description="WD 5">
    <location>
        <begin position="656"/>
        <end position="695"/>
    </location>
</feature>
<feature type="repeat" description="WD 6">
    <location>
        <begin position="697"/>
        <end position="736"/>
    </location>
</feature>
<feature type="repeat" description="WD 7">
    <location>
        <begin position="738"/>
        <end position="771"/>
    </location>
</feature>
<feature type="region of interest" description="Q domain" evidence="1">
    <location>
        <begin position="1"/>
        <end position="141"/>
    </location>
</feature>
<feature type="region of interest" description="Disordered" evidence="4">
    <location>
        <begin position="137"/>
        <end position="174"/>
    </location>
</feature>
<feature type="region of interest" description="GP domain" evidence="1">
    <location>
        <begin position="142"/>
        <end position="209"/>
    </location>
</feature>
<feature type="region of interest" description="Disordered" evidence="4">
    <location>
        <begin position="196"/>
        <end position="360"/>
    </location>
</feature>
<feature type="region of interest" description="CcN domain" evidence="1">
    <location>
        <begin position="210"/>
        <end position="278"/>
    </location>
</feature>
<feature type="region of interest" description="SP domain" evidence="1">
    <location>
        <begin position="279"/>
        <end position="451"/>
    </location>
</feature>
<feature type="short sequence motif" description="Nuclear localization signal" evidence="3">
    <location>
        <begin position="235"/>
        <end position="238"/>
    </location>
</feature>
<feature type="compositionally biased region" description="Low complexity" evidence="4">
    <location>
        <begin position="137"/>
        <end position="148"/>
    </location>
</feature>
<feature type="compositionally biased region" description="Basic and acidic residues" evidence="4">
    <location>
        <begin position="196"/>
        <end position="206"/>
    </location>
</feature>
<feature type="compositionally biased region" description="Low complexity" evidence="4">
    <location>
        <begin position="207"/>
        <end position="217"/>
    </location>
</feature>
<feature type="compositionally biased region" description="Basic and acidic residues" evidence="4">
    <location>
        <begin position="219"/>
        <end position="257"/>
    </location>
</feature>
<feature type="compositionally biased region" description="Basic and acidic residues" evidence="4">
    <location>
        <begin position="282"/>
        <end position="293"/>
    </location>
</feature>
<feature type="compositionally biased region" description="Low complexity" evidence="4">
    <location>
        <begin position="294"/>
        <end position="309"/>
    </location>
</feature>
<feature type="compositionally biased region" description="Basic and acidic residues" evidence="4">
    <location>
        <begin position="310"/>
        <end position="319"/>
    </location>
</feature>
<feature type="compositionally biased region" description="Polar residues" evidence="4">
    <location>
        <begin position="320"/>
        <end position="332"/>
    </location>
</feature>
<feature type="modified residue" description="Phosphoserine" evidence="5">
    <location>
        <position position="296"/>
    </location>
</feature>
<feature type="modified residue" description="Phosphoserine" evidence="5">
    <location>
        <position position="299"/>
    </location>
</feature>
<feature type="sequence conflict" description="In Ref. 4; AAB57808/CAA73070." evidence="8" ref="4">
    <original>P</original>
    <variation>H</variation>
    <location>
        <position position="332"/>
    </location>
</feature>
<feature type="sequence conflict" description="In Ref. 4; AAB57808/CAA73070." evidence="8" ref="4">
    <original>H</original>
    <variation>R</variation>
    <location>
        <position position="350"/>
    </location>
</feature>
<feature type="sequence conflict" description="In Ref. 4; AAB57808/CAA73070." evidence="8" ref="4">
    <original>P</original>
    <variation>A</variation>
    <location>
        <position position="398"/>
    </location>
</feature>
<feature type="sequence conflict" description="In Ref. 4; AAB57808/CAA73070." evidence="8" ref="4">
    <original>H</original>
    <variation>S</variation>
    <location>
        <position position="418"/>
    </location>
</feature>
<feature type="sequence conflict" description="In Ref. 4; AAB57808/CAA73070." evidence="8" ref="4">
    <original>V</original>
    <variation>A</variation>
    <location>
        <position position="548"/>
    </location>
</feature>
<feature type="sequence conflict" description="In Ref. 4; AAB57808/CAA73070." evidence="8" ref="4">
    <original>A</original>
    <variation>V</variation>
    <location>
        <position position="552"/>
    </location>
</feature>
<feature type="sequence conflict" description="In Ref. 4; AAB57808/CAA73070." evidence="8" ref="4">
    <original>T</original>
    <variation>P</variation>
    <location>
        <position position="630"/>
    </location>
</feature>
<feature type="sequence conflict" description="In Ref. 4; AAB57808/CAA73070." evidence="8" ref="4">
    <original>F</original>
    <variation>S</variation>
    <location>
        <position position="707"/>
    </location>
</feature>
<reference key="1">
    <citation type="journal article" date="2001" name="Dev. Biol.">
        <title>The homeobox protein Six3 interacts with the Groucho corepressor and acts as a transcriptional repressor in eye and forebrain formation.</title>
        <authorList>
            <person name="Kobayashi M."/>
            <person name="Nishikawa K."/>
            <person name="Suzuki T."/>
            <person name="Yamamoto M."/>
        </authorList>
    </citation>
    <scope>NUCLEOTIDE SEQUENCE [MRNA]</scope>
</reference>
<reference key="2">
    <citation type="journal article" date="2013" name="Nature">
        <title>The zebrafish reference genome sequence and its relationship to the human genome.</title>
        <authorList>
            <person name="Howe K."/>
            <person name="Clark M.D."/>
            <person name="Torroja C.F."/>
            <person name="Torrance J."/>
            <person name="Berthelot C."/>
            <person name="Muffato M."/>
            <person name="Collins J.E."/>
            <person name="Humphray S."/>
            <person name="McLaren K."/>
            <person name="Matthews L."/>
            <person name="McLaren S."/>
            <person name="Sealy I."/>
            <person name="Caccamo M."/>
            <person name="Churcher C."/>
            <person name="Scott C."/>
            <person name="Barrett J.C."/>
            <person name="Koch R."/>
            <person name="Rauch G.J."/>
            <person name="White S."/>
            <person name="Chow W."/>
            <person name="Kilian B."/>
            <person name="Quintais L.T."/>
            <person name="Guerra-Assuncao J.A."/>
            <person name="Zhou Y."/>
            <person name="Gu Y."/>
            <person name="Yen J."/>
            <person name="Vogel J.H."/>
            <person name="Eyre T."/>
            <person name="Redmond S."/>
            <person name="Banerjee R."/>
            <person name="Chi J."/>
            <person name="Fu B."/>
            <person name="Langley E."/>
            <person name="Maguire S.F."/>
            <person name="Laird G.K."/>
            <person name="Lloyd D."/>
            <person name="Kenyon E."/>
            <person name="Donaldson S."/>
            <person name="Sehra H."/>
            <person name="Almeida-King J."/>
            <person name="Loveland J."/>
            <person name="Trevanion S."/>
            <person name="Jones M."/>
            <person name="Quail M."/>
            <person name="Willey D."/>
            <person name="Hunt A."/>
            <person name="Burton J."/>
            <person name="Sims S."/>
            <person name="McLay K."/>
            <person name="Plumb B."/>
            <person name="Davis J."/>
            <person name="Clee C."/>
            <person name="Oliver K."/>
            <person name="Clark R."/>
            <person name="Riddle C."/>
            <person name="Elliot D."/>
            <person name="Threadgold G."/>
            <person name="Harden G."/>
            <person name="Ware D."/>
            <person name="Begum S."/>
            <person name="Mortimore B."/>
            <person name="Kerry G."/>
            <person name="Heath P."/>
            <person name="Phillimore B."/>
            <person name="Tracey A."/>
            <person name="Corby N."/>
            <person name="Dunn M."/>
            <person name="Johnson C."/>
            <person name="Wood J."/>
            <person name="Clark S."/>
            <person name="Pelan S."/>
            <person name="Griffiths G."/>
            <person name="Smith M."/>
            <person name="Glithero R."/>
            <person name="Howden P."/>
            <person name="Barker N."/>
            <person name="Lloyd C."/>
            <person name="Stevens C."/>
            <person name="Harley J."/>
            <person name="Holt K."/>
            <person name="Panagiotidis G."/>
            <person name="Lovell J."/>
            <person name="Beasley H."/>
            <person name="Henderson C."/>
            <person name="Gordon D."/>
            <person name="Auger K."/>
            <person name="Wright D."/>
            <person name="Collins J."/>
            <person name="Raisen C."/>
            <person name="Dyer L."/>
            <person name="Leung K."/>
            <person name="Robertson L."/>
            <person name="Ambridge K."/>
            <person name="Leongamornlert D."/>
            <person name="McGuire S."/>
            <person name="Gilderthorp R."/>
            <person name="Griffiths C."/>
            <person name="Manthravadi D."/>
            <person name="Nichol S."/>
            <person name="Barker G."/>
            <person name="Whitehead S."/>
            <person name="Kay M."/>
            <person name="Brown J."/>
            <person name="Murnane C."/>
            <person name="Gray E."/>
            <person name="Humphries M."/>
            <person name="Sycamore N."/>
            <person name="Barker D."/>
            <person name="Saunders D."/>
            <person name="Wallis J."/>
            <person name="Babbage A."/>
            <person name="Hammond S."/>
            <person name="Mashreghi-Mohammadi M."/>
            <person name="Barr L."/>
            <person name="Martin S."/>
            <person name="Wray P."/>
            <person name="Ellington A."/>
            <person name="Matthews N."/>
            <person name="Ellwood M."/>
            <person name="Woodmansey R."/>
            <person name="Clark G."/>
            <person name="Cooper J."/>
            <person name="Tromans A."/>
            <person name="Grafham D."/>
            <person name="Skuce C."/>
            <person name="Pandian R."/>
            <person name="Andrews R."/>
            <person name="Harrison E."/>
            <person name="Kimberley A."/>
            <person name="Garnett J."/>
            <person name="Fosker N."/>
            <person name="Hall R."/>
            <person name="Garner P."/>
            <person name="Kelly D."/>
            <person name="Bird C."/>
            <person name="Palmer S."/>
            <person name="Gehring I."/>
            <person name="Berger A."/>
            <person name="Dooley C.M."/>
            <person name="Ersan-Urun Z."/>
            <person name="Eser C."/>
            <person name="Geiger H."/>
            <person name="Geisler M."/>
            <person name="Karotki L."/>
            <person name="Kirn A."/>
            <person name="Konantz J."/>
            <person name="Konantz M."/>
            <person name="Oberlander M."/>
            <person name="Rudolph-Geiger S."/>
            <person name="Teucke M."/>
            <person name="Lanz C."/>
            <person name="Raddatz G."/>
            <person name="Osoegawa K."/>
            <person name="Zhu B."/>
            <person name="Rapp A."/>
            <person name="Widaa S."/>
            <person name="Langford C."/>
            <person name="Yang F."/>
            <person name="Schuster S.C."/>
            <person name="Carter N.P."/>
            <person name="Harrow J."/>
            <person name="Ning Z."/>
            <person name="Herrero J."/>
            <person name="Searle S.M."/>
            <person name="Enright A."/>
            <person name="Geisler R."/>
            <person name="Plasterk R.H."/>
            <person name="Lee C."/>
            <person name="Westerfield M."/>
            <person name="de Jong P.J."/>
            <person name="Zon L.I."/>
            <person name="Postlethwait J.H."/>
            <person name="Nusslein-Volhard C."/>
            <person name="Hubbard T.J."/>
            <person name="Roest Crollius H."/>
            <person name="Rogers J."/>
            <person name="Stemple D.L."/>
        </authorList>
    </citation>
    <scope>NUCLEOTIDE SEQUENCE [LARGE SCALE GENOMIC DNA]</scope>
    <source>
        <strain>Tuebingen</strain>
    </source>
</reference>
<reference evidence="9" key="3">
    <citation type="submission" date="2008-04" db="EMBL/GenBank/DDBJ databases">
        <authorList>
            <consortium name="NIH - Zebrafish Gene Collection (ZGC) project"/>
        </authorList>
    </citation>
    <scope>NUCLEOTIDE SEQUENCE [LARGE SCALE MRNA]</scope>
</reference>
<reference key="4">
    <citation type="journal article" date="1997" name="Dev. Genes Evol.">
        <title>Two zebrafish homologues of the Drosophila neurogenic gene groucho and their pattern of transcription during early embryogenesis.</title>
        <authorList>
            <person name="Wuelbeck C."/>
            <person name="Campos-Ortega J.A."/>
        </authorList>
    </citation>
    <scope>NUCLEOTIDE SEQUENCE [MRNA] OF 237-771</scope>
    <scope>TISSUE SPECIFICITY</scope>
    <scope>DEVELOPMENTAL STAGE</scope>
    <source>
        <tissue>Embryo</tissue>
    </source>
</reference>
<reference key="5">
    <citation type="journal article" date="2008" name="J. Proteome Res.">
        <title>Online automated in vivo zebrafish phosphoproteomics: from large-scale analysis down to a single embryo.</title>
        <authorList>
            <person name="Lemeer S."/>
            <person name="Pinkse M.W.H."/>
            <person name="Mohammed S."/>
            <person name="van Breukelen B."/>
            <person name="den Hertog J."/>
            <person name="Slijper M."/>
            <person name="Heck A.J.R."/>
        </authorList>
    </citation>
    <scope>PHOSPHORYLATION [LARGE SCALE ANALYSIS] AT SER-296 AND SER-299</scope>
    <scope>IDENTIFICATION BY MASS SPECTROMETRY</scope>
    <source>
        <tissue>Embryo</tissue>
    </source>
</reference>
<name>TLE3B_DANRE</name>
<proteinExistence type="evidence at protein level"/>